<proteinExistence type="inferred from homology"/>
<sequence length="94" mass="10358">MLRLDLQFFASKKGVGSTKNGRDSESKRLGAKRADGQFVTGGSILYRQRGTKIYPGENVGRGGDDTLFAKIDGAVKFERFGRDRKKVSVYPVAQ</sequence>
<dbReference type="EMBL" id="CP000560">
    <property type="protein sequence ID" value="ABS74859.1"/>
    <property type="molecule type" value="Genomic_DNA"/>
</dbReference>
<dbReference type="RefSeq" id="WP_012118102.1">
    <property type="nucleotide sequence ID" value="NC_009725.2"/>
</dbReference>
<dbReference type="SMR" id="A7Z783"/>
<dbReference type="GeneID" id="93081641"/>
<dbReference type="KEGG" id="bay:RBAM_024990"/>
<dbReference type="HOGENOM" id="CLU_095424_4_0_9"/>
<dbReference type="Proteomes" id="UP000001120">
    <property type="component" value="Chromosome"/>
</dbReference>
<dbReference type="GO" id="GO:0022625">
    <property type="term" value="C:cytosolic large ribosomal subunit"/>
    <property type="evidence" value="ECO:0007669"/>
    <property type="project" value="TreeGrafter"/>
</dbReference>
<dbReference type="GO" id="GO:0003735">
    <property type="term" value="F:structural constituent of ribosome"/>
    <property type="evidence" value="ECO:0007669"/>
    <property type="project" value="InterPro"/>
</dbReference>
<dbReference type="GO" id="GO:0006412">
    <property type="term" value="P:translation"/>
    <property type="evidence" value="ECO:0007669"/>
    <property type="project" value="UniProtKB-UniRule"/>
</dbReference>
<dbReference type="FunFam" id="2.40.50.100:FF:000004">
    <property type="entry name" value="50S ribosomal protein L27"/>
    <property type="match status" value="1"/>
</dbReference>
<dbReference type="Gene3D" id="2.40.50.100">
    <property type="match status" value="1"/>
</dbReference>
<dbReference type="HAMAP" id="MF_00539">
    <property type="entry name" value="Ribosomal_bL27"/>
    <property type="match status" value="1"/>
</dbReference>
<dbReference type="InterPro" id="IPR001684">
    <property type="entry name" value="Ribosomal_bL27"/>
</dbReference>
<dbReference type="InterPro" id="IPR018261">
    <property type="entry name" value="Ribosomal_bL27_CS"/>
</dbReference>
<dbReference type="NCBIfam" id="TIGR00062">
    <property type="entry name" value="L27"/>
    <property type="match status" value="1"/>
</dbReference>
<dbReference type="PANTHER" id="PTHR15893:SF0">
    <property type="entry name" value="LARGE RIBOSOMAL SUBUNIT PROTEIN BL27M"/>
    <property type="match status" value="1"/>
</dbReference>
<dbReference type="PANTHER" id="PTHR15893">
    <property type="entry name" value="RIBOSOMAL PROTEIN L27"/>
    <property type="match status" value="1"/>
</dbReference>
<dbReference type="Pfam" id="PF01016">
    <property type="entry name" value="Ribosomal_L27"/>
    <property type="match status" value="1"/>
</dbReference>
<dbReference type="PRINTS" id="PR00063">
    <property type="entry name" value="RIBOSOMALL27"/>
</dbReference>
<dbReference type="SUPFAM" id="SSF110324">
    <property type="entry name" value="Ribosomal L27 protein-like"/>
    <property type="match status" value="1"/>
</dbReference>
<dbReference type="PROSITE" id="PS00831">
    <property type="entry name" value="RIBOSOMAL_L27"/>
    <property type="match status" value="1"/>
</dbReference>
<protein>
    <recommendedName>
        <fullName evidence="2">Large ribosomal subunit protein bL27</fullName>
    </recommendedName>
    <alternativeName>
        <fullName evidence="3">50S ribosomal protein L27</fullName>
    </alternativeName>
</protein>
<reference key="1">
    <citation type="journal article" date="2007" name="Nat. Biotechnol.">
        <title>Comparative analysis of the complete genome sequence of the plant growth-promoting bacterium Bacillus amyloliquefaciens FZB42.</title>
        <authorList>
            <person name="Chen X.H."/>
            <person name="Koumoutsi A."/>
            <person name="Scholz R."/>
            <person name="Eisenreich A."/>
            <person name="Schneider K."/>
            <person name="Heinemeyer I."/>
            <person name="Morgenstern B."/>
            <person name="Voss B."/>
            <person name="Hess W.R."/>
            <person name="Reva O."/>
            <person name="Junge H."/>
            <person name="Voigt B."/>
            <person name="Jungblut P.R."/>
            <person name="Vater J."/>
            <person name="Suessmuth R."/>
            <person name="Liesegang H."/>
            <person name="Strittmatter A."/>
            <person name="Gottschalk G."/>
            <person name="Borriss R."/>
        </authorList>
    </citation>
    <scope>NUCLEOTIDE SEQUENCE [LARGE SCALE GENOMIC DNA]</scope>
    <source>
        <strain>DSM 23117 / BGSC 10A6 / LMG 26770 / FZB42</strain>
    </source>
</reference>
<organism>
    <name type="scientific">Bacillus velezensis (strain DSM 23117 / BGSC 10A6 / LMG 26770 / FZB42)</name>
    <name type="common">Bacillus amyloliquefaciens subsp. plantarum</name>
    <dbReference type="NCBI Taxonomy" id="326423"/>
    <lineage>
        <taxon>Bacteria</taxon>
        <taxon>Bacillati</taxon>
        <taxon>Bacillota</taxon>
        <taxon>Bacilli</taxon>
        <taxon>Bacillales</taxon>
        <taxon>Bacillaceae</taxon>
        <taxon>Bacillus</taxon>
        <taxon>Bacillus amyloliquefaciens group</taxon>
    </lineage>
</organism>
<keyword id="KW-0687">Ribonucleoprotein</keyword>
<keyword id="KW-0689">Ribosomal protein</keyword>
<feature type="propeptide" id="PRO_0000459846" evidence="1">
    <location>
        <begin position="1"/>
        <end position="9"/>
    </location>
</feature>
<feature type="chain" id="PRO_1000017411" description="Large ribosomal subunit protein bL27">
    <location>
        <begin position="10"/>
        <end position="94"/>
    </location>
</feature>
<comment type="PTM">
    <text evidence="1">The N-terminus is cleaved by ribosomal processing cysteine protease Prp.</text>
</comment>
<comment type="similarity">
    <text evidence="2">Belongs to the bacterial ribosomal protein bL27 family.</text>
</comment>
<accession>A7Z783</accession>
<gene>
    <name evidence="2" type="primary">rpmA</name>
    <name type="ordered locus">RBAM_024990</name>
</gene>
<name>RL27_BACVZ</name>
<evidence type="ECO:0000250" key="1">
    <source>
        <dbReference type="UniProtKB" id="Q2FXT0"/>
    </source>
</evidence>
<evidence type="ECO:0000255" key="2">
    <source>
        <dbReference type="HAMAP-Rule" id="MF_00539"/>
    </source>
</evidence>
<evidence type="ECO:0000305" key="3"/>